<evidence type="ECO:0000255" key="1">
    <source>
        <dbReference type="HAMAP-Rule" id="MF_00129"/>
    </source>
</evidence>
<dbReference type="EMBL" id="CP001072">
    <property type="protein sequence ID" value="ACD47674.1"/>
    <property type="molecule type" value="Genomic_DNA"/>
</dbReference>
<dbReference type="RefSeq" id="WP_000238021.1">
    <property type="nucleotide sequence ID" value="NC_010698.2"/>
</dbReference>
<dbReference type="SMR" id="B2US42"/>
<dbReference type="KEGG" id="hps:HPSH_01100"/>
<dbReference type="HOGENOM" id="CLU_007831_2_2_7"/>
<dbReference type="GO" id="GO:0005829">
    <property type="term" value="C:cytosol"/>
    <property type="evidence" value="ECO:0007669"/>
    <property type="project" value="TreeGrafter"/>
</dbReference>
<dbReference type="GO" id="GO:0050660">
    <property type="term" value="F:flavin adenine dinucleotide binding"/>
    <property type="evidence" value="ECO:0007669"/>
    <property type="project" value="UniProtKB-UniRule"/>
</dbReference>
<dbReference type="GO" id="GO:0030488">
    <property type="term" value="P:tRNA methylation"/>
    <property type="evidence" value="ECO:0007669"/>
    <property type="project" value="TreeGrafter"/>
</dbReference>
<dbReference type="GO" id="GO:0002098">
    <property type="term" value="P:tRNA wobble uridine modification"/>
    <property type="evidence" value="ECO:0007669"/>
    <property type="project" value="InterPro"/>
</dbReference>
<dbReference type="FunFam" id="1.10.150.570:FF:000001">
    <property type="entry name" value="tRNA uridine 5-carboxymethylaminomethyl modification enzyme MnmG"/>
    <property type="match status" value="1"/>
</dbReference>
<dbReference type="FunFam" id="3.50.50.60:FF:000002">
    <property type="entry name" value="tRNA uridine 5-carboxymethylaminomethyl modification enzyme MnmG"/>
    <property type="match status" value="1"/>
</dbReference>
<dbReference type="Gene3D" id="3.50.50.60">
    <property type="entry name" value="FAD/NAD(P)-binding domain"/>
    <property type="match status" value="2"/>
</dbReference>
<dbReference type="Gene3D" id="1.10.150.570">
    <property type="entry name" value="GidA associated domain, C-terminal subdomain"/>
    <property type="match status" value="1"/>
</dbReference>
<dbReference type="Gene3D" id="1.10.10.1800">
    <property type="entry name" value="tRNA uridine 5-carboxymethylaminomethyl modification enzyme MnmG/GidA"/>
    <property type="match status" value="1"/>
</dbReference>
<dbReference type="HAMAP" id="MF_00129">
    <property type="entry name" value="MnmG_GidA"/>
    <property type="match status" value="1"/>
</dbReference>
<dbReference type="InterPro" id="IPR036188">
    <property type="entry name" value="FAD/NAD-bd_sf"/>
</dbReference>
<dbReference type="InterPro" id="IPR049312">
    <property type="entry name" value="GIDA_C_N"/>
</dbReference>
<dbReference type="InterPro" id="IPR004416">
    <property type="entry name" value="MnmG"/>
</dbReference>
<dbReference type="InterPro" id="IPR002218">
    <property type="entry name" value="MnmG-rel"/>
</dbReference>
<dbReference type="InterPro" id="IPR020595">
    <property type="entry name" value="MnmG-rel_CS"/>
</dbReference>
<dbReference type="InterPro" id="IPR026904">
    <property type="entry name" value="MnmG_C"/>
</dbReference>
<dbReference type="InterPro" id="IPR047001">
    <property type="entry name" value="MnmG_C_subdom"/>
</dbReference>
<dbReference type="InterPro" id="IPR044920">
    <property type="entry name" value="MnmG_C_subdom_sf"/>
</dbReference>
<dbReference type="InterPro" id="IPR040131">
    <property type="entry name" value="MnmG_N"/>
</dbReference>
<dbReference type="NCBIfam" id="TIGR00136">
    <property type="entry name" value="mnmG_gidA"/>
    <property type="match status" value="1"/>
</dbReference>
<dbReference type="PANTHER" id="PTHR11806">
    <property type="entry name" value="GLUCOSE INHIBITED DIVISION PROTEIN A"/>
    <property type="match status" value="1"/>
</dbReference>
<dbReference type="PANTHER" id="PTHR11806:SF0">
    <property type="entry name" value="PROTEIN MTO1 HOMOLOG, MITOCHONDRIAL"/>
    <property type="match status" value="1"/>
</dbReference>
<dbReference type="Pfam" id="PF01134">
    <property type="entry name" value="GIDA"/>
    <property type="match status" value="1"/>
</dbReference>
<dbReference type="Pfam" id="PF21680">
    <property type="entry name" value="GIDA_C_1st"/>
    <property type="match status" value="1"/>
</dbReference>
<dbReference type="Pfam" id="PF13932">
    <property type="entry name" value="SAM_GIDA_C"/>
    <property type="match status" value="1"/>
</dbReference>
<dbReference type="PRINTS" id="PR00411">
    <property type="entry name" value="PNDRDTASEI"/>
</dbReference>
<dbReference type="SMART" id="SM01228">
    <property type="entry name" value="GIDA_assoc_3"/>
    <property type="match status" value="1"/>
</dbReference>
<dbReference type="SUPFAM" id="SSF51905">
    <property type="entry name" value="FAD/NAD(P)-binding domain"/>
    <property type="match status" value="1"/>
</dbReference>
<dbReference type="PROSITE" id="PS01280">
    <property type="entry name" value="GIDA_1"/>
    <property type="match status" value="1"/>
</dbReference>
<dbReference type="PROSITE" id="PS01281">
    <property type="entry name" value="GIDA_2"/>
    <property type="match status" value="1"/>
</dbReference>
<gene>
    <name evidence="1" type="primary">mnmG</name>
    <name evidence="1" type="synonym">gidA</name>
    <name type="ordered locus">HPSH_01100</name>
</gene>
<keyword id="KW-0963">Cytoplasm</keyword>
<keyword id="KW-0274">FAD</keyword>
<keyword id="KW-0285">Flavoprotein</keyword>
<keyword id="KW-0520">NAD</keyword>
<keyword id="KW-0819">tRNA processing</keyword>
<accession>B2US42</accession>
<protein>
    <recommendedName>
        <fullName evidence="1">tRNA uridine 5-carboxymethylaminomethyl modification enzyme MnmG</fullName>
    </recommendedName>
    <alternativeName>
        <fullName evidence="1">Glucose-inhibited division protein A</fullName>
    </alternativeName>
</protein>
<reference key="1">
    <citation type="submission" date="2008-05" db="EMBL/GenBank/DDBJ databases">
        <title>Genome sequence of Helicobacter pylori from the remote Amazon: traces of Asian ancestry of the first Americans.</title>
        <authorList>
            <person name="Kersulyte D."/>
            <person name="Kalia A."/>
            <person name="Gilman R.H."/>
            <person name="Berg D.E."/>
        </authorList>
    </citation>
    <scope>NUCLEOTIDE SEQUENCE [LARGE SCALE GENOMIC DNA]</scope>
    <source>
        <strain>Shi470</strain>
    </source>
</reference>
<sequence length="621" mass="69710">MVKESDILVIGGGHAGIEASLIAAKMGARVHLITMLIDTIGLASCNPAIGGLGKGHLTKEVDVLGGAMGIITDNSGLQYRVLNASKGPAVRGTRAQIDMDTYRIFARNLVLNTPNLSVSQEMTESLIIENDEMVGVTTNINNTYKAKKVIITTGTFLKGVVHIGEHQNQNGRFGENASNSLALNLRELGFRVERLKTGTCPRVAGNSIDFEGLEEHFGDTNPPYFSYKTKDFNPTQLSCFITYTNPITHQIIRDNFHRAPLFSGQIEGIGPRYCPSIEDKINRFSEKERHQLFLEPQTIHKSEYYINGLSTSLPLDVQEKVIHSIKGLENALITRYGYAIEYDFIQPTELTHTLETKKIKGLYLAGQINGTTGYEEAAAQGLMAGINAVLALKNQDPFILKRNEAYIGVLIDDLVTKGTNEPYRMFTSRAEYRLLLREDNTLFRLGEHAYRLGLMEEDFYKGLKKDQQEIQDNLKRLKECVLTPSKEVLKRLNELDENPINDKVDGVSLLARDSFNLEKMRSFFSFLTPLNERVLEQIKIECKYNIYIEKQHENIAKMDSMLKVSIPKGFVFKGIPGLSLEAVEKLEKFRPKSLFEASEISGITPANLDVLHLYIHLRKNS</sequence>
<proteinExistence type="inferred from homology"/>
<comment type="function">
    <text evidence="1">NAD-binding protein involved in the addition of a carboxymethylaminomethyl (cmnm) group at the wobble position (U34) of certain tRNAs, forming tRNA-cmnm(5)s(2)U34.</text>
</comment>
<comment type="cofactor">
    <cofactor evidence="1">
        <name>FAD</name>
        <dbReference type="ChEBI" id="CHEBI:57692"/>
    </cofactor>
</comment>
<comment type="subunit">
    <text evidence="1">Homodimer. Heterotetramer of two MnmE and two MnmG subunits.</text>
</comment>
<comment type="subcellular location">
    <subcellularLocation>
        <location evidence="1">Cytoplasm</location>
    </subcellularLocation>
</comment>
<comment type="similarity">
    <text evidence="1">Belongs to the MnmG family.</text>
</comment>
<feature type="chain" id="PRO_1000095654" description="tRNA uridine 5-carboxymethylaminomethyl modification enzyme MnmG">
    <location>
        <begin position="1"/>
        <end position="621"/>
    </location>
</feature>
<feature type="binding site" evidence="1">
    <location>
        <begin position="11"/>
        <end position="16"/>
    </location>
    <ligand>
        <name>FAD</name>
        <dbReference type="ChEBI" id="CHEBI:57692"/>
    </ligand>
</feature>
<feature type="binding site" evidence="1">
    <location>
        <begin position="270"/>
        <end position="284"/>
    </location>
    <ligand>
        <name>NAD(+)</name>
        <dbReference type="ChEBI" id="CHEBI:57540"/>
    </ligand>
</feature>
<name>MNMG_HELPS</name>
<organism>
    <name type="scientific">Helicobacter pylori (strain Shi470)</name>
    <dbReference type="NCBI Taxonomy" id="512562"/>
    <lineage>
        <taxon>Bacteria</taxon>
        <taxon>Pseudomonadati</taxon>
        <taxon>Campylobacterota</taxon>
        <taxon>Epsilonproteobacteria</taxon>
        <taxon>Campylobacterales</taxon>
        <taxon>Helicobacteraceae</taxon>
        <taxon>Helicobacter</taxon>
    </lineage>
</organism>